<reference key="1">
    <citation type="journal article" date="2016" name="Nature">
        <title>Genome evolution in the allotetraploid frog Xenopus laevis.</title>
        <authorList>
            <person name="Session A.M."/>
            <person name="Uno Y."/>
            <person name="Kwon T."/>
            <person name="Chapman J.A."/>
            <person name="Toyoda A."/>
            <person name="Takahashi S."/>
            <person name="Fukui A."/>
            <person name="Hikosaka A."/>
            <person name="Suzuki A."/>
            <person name="Kondo M."/>
            <person name="van Heeringen S.J."/>
            <person name="Quigley I."/>
            <person name="Heinz S."/>
            <person name="Ogino H."/>
            <person name="Ochi H."/>
            <person name="Hellsten U."/>
            <person name="Lyons J.B."/>
            <person name="Simakov O."/>
            <person name="Putnam N."/>
            <person name="Stites J."/>
            <person name="Kuroki Y."/>
            <person name="Tanaka T."/>
            <person name="Michiue T."/>
            <person name="Watanabe M."/>
            <person name="Bogdanovic O."/>
            <person name="Lister R."/>
            <person name="Georgiou G."/>
            <person name="Paranjpe S.S."/>
            <person name="van Kruijsbergen I."/>
            <person name="Shu S."/>
            <person name="Carlson J."/>
            <person name="Kinoshita T."/>
            <person name="Ohta Y."/>
            <person name="Mawaribuchi S."/>
            <person name="Jenkins J."/>
            <person name="Grimwood J."/>
            <person name="Schmutz J."/>
            <person name="Mitros T."/>
            <person name="Mozaffari S.V."/>
            <person name="Suzuki Y."/>
            <person name="Haramoto Y."/>
            <person name="Yamamoto T.S."/>
            <person name="Takagi C."/>
            <person name="Heald R."/>
            <person name="Miller K."/>
            <person name="Haudenschild C."/>
            <person name="Kitzman J."/>
            <person name="Nakayama T."/>
            <person name="Izutsu Y."/>
            <person name="Robert J."/>
            <person name="Fortriede J."/>
            <person name="Burns K."/>
            <person name="Lotay V."/>
            <person name="Karimi K."/>
            <person name="Yasuoka Y."/>
            <person name="Dichmann D.S."/>
            <person name="Flajnik M.F."/>
            <person name="Houston D.W."/>
            <person name="Shendure J."/>
            <person name="DuPasquier L."/>
            <person name="Vize P.D."/>
            <person name="Zorn A.M."/>
            <person name="Ito M."/>
            <person name="Marcotte E.M."/>
            <person name="Wallingford J.B."/>
            <person name="Ito Y."/>
            <person name="Asashima M."/>
            <person name="Ueno N."/>
            <person name="Matsuda Y."/>
            <person name="Veenstra G.J."/>
            <person name="Fujiyama A."/>
            <person name="Harland R.M."/>
            <person name="Taira M."/>
            <person name="Rokhsar D.S."/>
        </authorList>
    </citation>
    <scope>NUCLEOTIDE SEQUENCE [LARGE SCALE GENOMIC DNA]</scope>
</reference>
<reference key="2">
    <citation type="journal article" date="2022" name="Nat. Genet.">
        <title>Discovery of a genetic module essential for assigning left-right asymmetry in humans and ancestral vertebrates.</title>
        <authorList>
            <person name="Szenker-Ravi E."/>
            <person name="Ott T."/>
            <person name="Khatoo M."/>
            <person name="de Bellaing A.M."/>
            <person name="Goh W.X."/>
            <person name="Chong Y.L."/>
            <person name="Beckers A."/>
            <person name="Kannesan D."/>
            <person name="Louvel G."/>
            <person name="Anujan P."/>
            <person name="Ravi V."/>
            <person name="Bonnard C."/>
            <person name="Moutton S."/>
            <person name="Schoen P."/>
            <person name="Fradin M."/>
            <person name="Colin E."/>
            <person name="Megarbane A."/>
            <person name="Daou L."/>
            <person name="Chehab G."/>
            <person name="Di Filippo S."/>
            <person name="Rooryck C."/>
            <person name="Deleuze J.F."/>
            <person name="Boland A."/>
            <person name="Arribard N."/>
            <person name="Eker R."/>
            <person name="Tohari S."/>
            <person name="Ng A.Y."/>
            <person name="Rio M."/>
            <person name="Lim C.T."/>
            <person name="Eisenhaber B."/>
            <person name="Eisenhaber F."/>
            <person name="Venkatesh B."/>
            <person name="Amiel J."/>
            <person name="Crollius H.R."/>
            <person name="Gordon C.T."/>
            <person name="Gossler A."/>
            <person name="Roy S."/>
            <person name="Attie-Bitach T."/>
            <person name="Blum M."/>
            <person name="Bouvagnet P."/>
            <person name="Reversade B."/>
        </authorList>
    </citation>
    <scope>DEVELOPMENTAL STAGE</scope>
    <scope>DISRUPTION PHENOTYPE</scope>
    <scope>FUNCTION</scope>
</reference>
<comment type="function">
    <text evidence="5">Putative metalloprotease playing a role in the process of LR patterning.</text>
</comment>
<comment type="cofactor">
    <cofactor evidence="1">
        <name>Zn(2+)</name>
        <dbReference type="ChEBI" id="CHEBI:29105"/>
    </cofactor>
    <text evidence="1">Binds 1 zinc ion per subunit.</text>
</comment>
<comment type="subcellular location">
    <subcellularLocation>
        <location evidence="3">Membrane</location>
        <topology evidence="3">Single-pass type I membrane protein</topology>
    </subcellularLocation>
</comment>
<comment type="developmental stage">
    <text evidence="5">First expressed at stage 10.5 in the involuting marginal zone (IMZ) along a dorsal-high ventral-low gradient and, by stage 14 in cells of the circumblastoporal collar.</text>
</comment>
<comment type="disruption phenotype">
    <text evidence="5">Embryos with CRISPR-induced cirop null present heterotaxy phenotype (heart looping and intestine defects). No other ciliopathy-related phenotypes such as body curvature, kidney cysts or hydrocephalus are observed in cirop mutant embryos.</text>
</comment>
<comment type="similarity">
    <text evidence="6">Belongs to the peptidase M8 family.</text>
</comment>
<feature type="signal peptide" evidence="3">
    <location>
        <begin position="1"/>
        <end position="25"/>
    </location>
</feature>
<feature type="chain" id="PRO_5023971209" description="Ciliated left-right organizer metallopeptidase">
    <location>
        <begin position="26"/>
        <end position="720"/>
    </location>
</feature>
<feature type="topological domain" description="Extracellular" evidence="6">
    <location>
        <begin position="26"/>
        <end position="668"/>
    </location>
</feature>
<feature type="transmembrane region" description="Helical" evidence="3">
    <location>
        <begin position="669"/>
        <end position="689"/>
    </location>
</feature>
<feature type="topological domain" description="Cytoplasmic" evidence="6">
    <location>
        <begin position="690"/>
        <end position="720"/>
    </location>
</feature>
<feature type="active site" evidence="4">
    <location>
        <position position="244"/>
    </location>
</feature>
<feature type="binding site" evidence="4">
    <location>
        <position position="243"/>
    </location>
    <ligand>
        <name>Zn(2+)</name>
        <dbReference type="ChEBI" id="CHEBI:29105"/>
        <note>catalytic</note>
    </ligand>
</feature>
<feature type="binding site" evidence="4">
    <location>
        <position position="247"/>
    </location>
    <ligand>
        <name>Zn(2+)</name>
        <dbReference type="ChEBI" id="CHEBI:29105"/>
        <note>catalytic</note>
    </ligand>
</feature>
<feature type="binding site" evidence="4">
    <location>
        <position position="322"/>
    </location>
    <ligand>
        <name>Zn(2+)</name>
        <dbReference type="ChEBI" id="CHEBI:29105"/>
        <note>catalytic</note>
    </ligand>
</feature>
<proteinExistence type="evidence at transcript level"/>
<organism>
    <name type="scientific">Xenopus laevis</name>
    <name type="common">African clawed frog</name>
    <dbReference type="NCBI Taxonomy" id="8355"/>
    <lineage>
        <taxon>Eukaryota</taxon>
        <taxon>Metazoa</taxon>
        <taxon>Chordata</taxon>
        <taxon>Craniata</taxon>
        <taxon>Vertebrata</taxon>
        <taxon>Euteleostomi</taxon>
        <taxon>Amphibia</taxon>
        <taxon>Batrachia</taxon>
        <taxon>Anura</taxon>
        <taxon>Pipoidea</taxon>
        <taxon>Pipidae</taxon>
        <taxon>Xenopodinae</taxon>
        <taxon>Xenopus</taxon>
        <taxon>Xenopus</taxon>
    </lineage>
</organism>
<accession>A0A1L8HYT7</accession>
<dbReference type="EC" id="3.4.24.-" evidence="2"/>
<dbReference type="EMBL" id="CM004466">
    <property type="protein sequence ID" value="OCU01276.1"/>
    <property type="molecule type" value="Genomic_DNA"/>
</dbReference>
<dbReference type="SMR" id="A0A1L8HYT7"/>
<dbReference type="STRING" id="8355.A0A1L8HYT7"/>
<dbReference type="PaxDb" id="8355-A0A1L8HYT7"/>
<dbReference type="GeneID" id="108714878"/>
<dbReference type="KEGG" id="xla:108714878"/>
<dbReference type="CTD" id="108714878"/>
<dbReference type="OMA" id="CTERGAY"/>
<dbReference type="OrthoDB" id="527990at2759"/>
<dbReference type="Proteomes" id="UP000186698">
    <property type="component" value="Chromosome 1L"/>
</dbReference>
<dbReference type="Proteomes" id="UP000694892">
    <property type="component" value="Chromosome 1L"/>
</dbReference>
<dbReference type="Bgee" id="108714878">
    <property type="expression patterns" value="Expressed in kidney and 8 other cell types or tissues"/>
</dbReference>
<dbReference type="GO" id="GO:0005737">
    <property type="term" value="C:cytoplasm"/>
    <property type="evidence" value="ECO:0000318"/>
    <property type="project" value="GO_Central"/>
</dbReference>
<dbReference type="GO" id="GO:0016020">
    <property type="term" value="C:membrane"/>
    <property type="evidence" value="ECO:0007669"/>
    <property type="project" value="UniProtKB-SubCell"/>
</dbReference>
<dbReference type="GO" id="GO:0046872">
    <property type="term" value="F:metal ion binding"/>
    <property type="evidence" value="ECO:0007669"/>
    <property type="project" value="UniProtKB-KW"/>
</dbReference>
<dbReference type="GO" id="GO:0004222">
    <property type="term" value="F:metalloendopeptidase activity"/>
    <property type="evidence" value="ECO:0007669"/>
    <property type="project" value="InterPro"/>
</dbReference>
<dbReference type="GO" id="GO:0008233">
    <property type="term" value="F:peptidase activity"/>
    <property type="evidence" value="ECO:0000318"/>
    <property type="project" value="GO_Central"/>
</dbReference>
<dbReference type="GO" id="GO:0007155">
    <property type="term" value="P:cell adhesion"/>
    <property type="evidence" value="ECO:0007669"/>
    <property type="project" value="InterPro"/>
</dbReference>
<dbReference type="GO" id="GO:0061371">
    <property type="term" value="P:determination of heart left/right asymmetry"/>
    <property type="evidence" value="ECO:0000315"/>
    <property type="project" value="UniProtKB"/>
</dbReference>
<dbReference type="GO" id="GO:0061966">
    <property type="term" value="P:establishment of left/right asymmetry"/>
    <property type="evidence" value="ECO:0000315"/>
    <property type="project" value="UniProtKB"/>
</dbReference>
<dbReference type="GO" id="GO:0006508">
    <property type="term" value="P:proteolysis"/>
    <property type="evidence" value="ECO:0007669"/>
    <property type="project" value="UniProtKB-KW"/>
</dbReference>
<dbReference type="Gene3D" id="3.10.170.20">
    <property type="match status" value="1"/>
</dbReference>
<dbReference type="Gene3D" id="3.90.132.10">
    <property type="entry name" value="Leishmanolysin , domain 2"/>
    <property type="match status" value="1"/>
</dbReference>
<dbReference type="Gene3D" id="2.30.34.10">
    <property type="entry name" value="Leishmanolysin domain 4"/>
    <property type="match status" value="1"/>
</dbReference>
<dbReference type="InterPro" id="IPR001577">
    <property type="entry name" value="Peptidase_M8"/>
</dbReference>
<dbReference type="PANTHER" id="PTHR10942:SF6">
    <property type="entry name" value="CILIATED LEFT-RIGHT ORGANIZER METALLOPEPTIDASE"/>
    <property type="match status" value="1"/>
</dbReference>
<dbReference type="PANTHER" id="PTHR10942">
    <property type="entry name" value="LEISHMANOLYSIN-LIKE PEPTIDASE"/>
    <property type="match status" value="1"/>
</dbReference>
<dbReference type="Pfam" id="PF01457">
    <property type="entry name" value="Peptidase_M8"/>
    <property type="match status" value="2"/>
</dbReference>
<dbReference type="SUPFAM" id="SSF55486">
    <property type="entry name" value="Metalloproteases ('zincins'), catalytic domain"/>
    <property type="match status" value="1"/>
</dbReference>
<dbReference type="PROSITE" id="PS00142">
    <property type="entry name" value="ZINC_PROTEASE"/>
    <property type="match status" value="1"/>
</dbReference>
<gene>
    <name type="primary">cirop</name>
</gene>
<name>CIROP_XENLA</name>
<keyword id="KW-0378">Hydrolase</keyword>
<keyword id="KW-0472">Membrane</keyword>
<keyword id="KW-0479">Metal-binding</keyword>
<keyword id="KW-0482">Metalloprotease</keyword>
<keyword id="KW-0645">Protease</keyword>
<keyword id="KW-1185">Reference proteome</keyword>
<keyword id="KW-0732">Signal</keyword>
<keyword id="KW-0812">Transmembrane</keyword>
<keyword id="KW-1133">Transmembrane helix</keyword>
<keyword id="KW-0862">Zinc</keyword>
<protein>
    <recommendedName>
        <fullName>Ciliated left-right organizer metallopeptidase</fullName>
        <ecNumber evidence="2">3.4.24.-</ecNumber>
    </recommendedName>
    <alternativeName>
        <fullName>Leishmanolysin-like peptidase 2</fullName>
    </alternativeName>
</protein>
<sequence length="720" mass="80584">MTVSFSMFQIYRLVWLSFMTSMCLSACIHDSVLQETPVVSSNIISSRVPRLFPRSTSSDYFQPLRVTPWYLLGENAFISQGQIRQLKIALQEVTQMLSSTLSVHRSEGSLLLNRDISRFCRSVWRAPNDNKCAYMQTSYQGEKCLDVTIPDFHLQGVKVWSDLEKEPRTVIEDGAGVPDTDFLLYVQVAQTQKCAAQPSVIAYASYCQQDPTGRPLAGVIVFCTDHLREEEYNQRHIIQVALHELLHTLGFSSSLYASWLDCSLAEYGEACSSRTRVTNTDENGQFRIYTPTVMQKMGEHLGVEGVGAPLENKGFPNLASSHWESRFFQGSIMTALLSPPHLTHLDPITLAAFTDMGWYKVNATIKSQLMWGKGAGRYFGLPTTCQDSSTGFFCTGSKLGCHHLHLDKGNCSTDSYLEGCHIYSPLIHGGECWRHQNSGDPDEIFHAQSRCFYSNLTKGASPNQEFRGRCYLHQCLGENHFQVKVHESEWTDCPAGAWIQVAGYEGFIQCPSGCLCLGFQTPHVATLTPTYVTGQITTVKENNVYPTEGIVQFRVQVEVSQRHKWTSEIKSFLLDEVLGVIAQKAGVQRCFLQSHMKEDLDLSFAIVGKWSTDCPPTPEADTAAFSLLTLNQDGAPYIIYNSSYFSTVSIRFIDSDPPALYVSHMLYSYVIGGGCCAVCGAAIIFALFWYKLRRQFLRVGSSYPPETSNHERPQIPADLV</sequence>
<evidence type="ECO:0000250" key="1">
    <source>
        <dbReference type="UniProtKB" id="P08148"/>
    </source>
</evidence>
<evidence type="ECO:0000250" key="2">
    <source>
        <dbReference type="UniProtKB" id="Q9VH19"/>
    </source>
</evidence>
<evidence type="ECO:0000255" key="3"/>
<evidence type="ECO:0000255" key="4">
    <source>
        <dbReference type="PROSITE-ProRule" id="PRU10095"/>
    </source>
</evidence>
<evidence type="ECO:0000269" key="5">
    <source>
    </source>
</evidence>
<evidence type="ECO:0000305" key="6"/>